<proteinExistence type="inferred from homology"/>
<evidence type="ECO:0000255" key="1"/>
<accession>Q2MB16</accession>
<accession>Q2EES2</accession>
<sequence length="79" mass="8514">MRFIIRTVMLIALVWIGLLLSGYGVLIGSKENAAGLGLQCTYLTARGTSTVQYLHTKSGFLGITDCPLLRKSNIVVDNG</sequence>
<reference key="1">
    <citation type="journal article" date="1997" name="Science">
        <title>The complete genome sequence of Escherichia coli K-12.</title>
        <authorList>
            <person name="Blattner F.R."/>
            <person name="Plunkett G. III"/>
            <person name="Bloch C.A."/>
            <person name="Perna N.T."/>
            <person name="Burland V."/>
            <person name="Riley M."/>
            <person name="Collado-Vides J."/>
            <person name="Glasner J.D."/>
            <person name="Rode C.K."/>
            <person name="Mayhew G.F."/>
            <person name="Gregor J."/>
            <person name="Davis N.W."/>
            <person name="Kirkpatrick H.A."/>
            <person name="Goeden M.A."/>
            <person name="Rose D.J."/>
            <person name="Mau B."/>
            <person name="Shao Y."/>
        </authorList>
    </citation>
    <scope>NUCLEOTIDE SEQUENCE [LARGE SCALE GENOMIC DNA]</scope>
    <source>
        <strain>K12 / MG1655 / ATCC 47076</strain>
    </source>
</reference>
<reference key="2">
    <citation type="journal article" date="2006" name="Mol. Syst. Biol.">
        <title>Highly accurate genome sequences of Escherichia coli K-12 strains MG1655 and W3110.</title>
        <authorList>
            <person name="Hayashi K."/>
            <person name="Morooka N."/>
            <person name="Yamamoto Y."/>
            <person name="Fujita K."/>
            <person name="Isono K."/>
            <person name="Choi S."/>
            <person name="Ohtsubo E."/>
            <person name="Baba T."/>
            <person name="Wanner B.L."/>
            <person name="Mori H."/>
            <person name="Horiuchi T."/>
        </authorList>
    </citation>
    <scope>NUCLEOTIDE SEQUENCE [LARGE SCALE GENOMIC DNA]</scope>
    <source>
        <strain>K12 / W3110 / ATCC 27325 / DSM 5911</strain>
    </source>
</reference>
<feature type="signal peptide" evidence="1">
    <location>
        <begin position="1"/>
        <end position="33"/>
    </location>
</feature>
<feature type="chain" id="PRO_0000259703" description="Uncharacterized protein YobH">
    <location>
        <begin position="34"/>
        <end position="79"/>
    </location>
</feature>
<name>YOBH_ECOLI</name>
<gene>
    <name type="primary">yobH</name>
    <name type="ordered locus">b4536</name>
    <name type="ordered locus">JW5298</name>
</gene>
<keyword id="KW-1185">Reference proteome</keyword>
<keyword id="KW-0732">Signal</keyword>
<dbReference type="EMBL" id="U00096">
    <property type="protein sequence ID" value="ABD18672.1"/>
    <property type="molecule type" value="Genomic_DNA"/>
</dbReference>
<dbReference type="EMBL" id="AP009048">
    <property type="protein sequence ID" value="BAE76540.1"/>
    <property type="molecule type" value="Genomic_DNA"/>
</dbReference>
<dbReference type="RefSeq" id="WP_001211011.1">
    <property type="nucleotide sequence ID" value="NZ_STEB01000009.1"/>
</dbReference>
<dbReference type="RefSeq" id="YP_588456.1">
    <property type="nucleotide sequence ID" value="NC_000913.3"/>
</dbReference>
<dbReference type="BioGRID" id="4261733">
    <property type="interactions" value="3"/>
</dbReference>
<dbReference type="FunCoup" id="Q2MB16">
    <property type="interactions" value="2"/>
</dbReference>
<dbReference type="STRING" id="511145.b4536"/>
<dbReference type="jPOST" id="Q2MB16"/>
<dbReference type="PaxDb" id="511145-b4536"/>
<dbReference type="EnsemblBacteria" id="ABD18672">
    <property type="protein sequence ID" value="ABD18672"/>
    <property type="gene ID" value="b4536"/>
</dbReference>
<dbReference type="GeneID" id="1450271"/>
<dbReference type="KEGG" id="ecj:JW5298"/>
<dbReference type="KEGG" id="eco:b4536"/>
<dbReference type="KEGG" id="ecoc:C3026_10410"/>
<dbReference type="PATRIC" id="fig|511145.12.peg.1904"/>
<dbReference type="eggNOG" id="ENOG5032T57">
    <property type="taxonomic scope" value="Bacteria"/>
</dbReference>
<dbReference type="HOGENOM" id="CLU_179882_0_0_6"/>
<dbReference type="InParanoid" id="Q2MB16"/>
<dbReference type="OMA" id="WLAMLFT"/>
<dbReference type="OrthoDB" id="6415197at2"/>
<dbReference type="PhylomeDB" id="Q2MB16"/>
<dbReference type="BioCyc" id="EcoCyc:MONOMER0-2676"/>
<dbReference type="PRO" id="PR:Q2MB16"/>
<dbReference type="Proteomes" id="UP000000625">
    <property type="component" value="Chromosome"/>
</dbReference>
<dbReference type="InterPro" id="IPR025611">
    <property type="entry name" value="YobH"/>
</dbReference>
<dbReference type="Pfam" id="PF13996">
    <property type="entry name" value="YobH"/>
    <property type="match status" value="1"/>
</dbReference>
<organism>
    <name type="scientific">Escherichia coli (strain K12)</name>
    <dbReference type="NCBI Taxonomy" id="83333"/>
    <lineage>
        <taxon>Bacteria</taxon>
        <taxon>Pseudomonadati</taxon>
        <taxon>Pseudomonadota</taxon>
        <taxon>Gammaproteobacteria</taxon>
        <taxon>Enterobacterales</taxon>
        <taxon>Enterobacteriaceae</taxon>
        <taxon>Escherichia</taxon>
    </lineage>
</organism>
<protein>
    <recommendedName>
        <fullName>Uncharacterized protein YobH</fullName>
    </recommendedName>
</protein>